<organism>
    <name type="scientific">Arabidopsis thaliana</name>
    <name type="common">Mouse-ear cress</name>
    <dbReference type="NCBI Taxonomy" id="3702"/>
    <lineage>
        <taxon>Eukaryota</taxon>
        <taxon>Viridiplantae</taxon>
        <taxon>Streptophyta</taxon>
        <taxon>Embryophyta</taxon>
        <taxon>Tracheophyta</taxon>
        <taxon>Spermatophyta</taxon>
        <taxon>Magnoliopsida</taxon>
        <taxon>eudicotyledons</taxon>
        <taxon>Gunneridae</taxon>
        <taxon>Pentapetalae</taxon>
        <taxon>rosids</taxon>
        <taxon>malvids</taxon>
        <taxon>Brassicales</taxon>
        <taxon>Brassicaceae</taxon>
        <taxon>Camelineae</taxon>
        <taxon>Arabidopsis</taxon>
    </lineage>
</organism>
<keyword id="KW-0157">Chromophore</keyword>
<keyword id="KW-0274">FAD</keyword>
<keyword id="KW-0285">Flavoprotein</keyword>
<keyword id="KW-0600">Photoreceptor protein</keyword>
<keyword id="KW-0675">Receptor</keyword>
<keyword id="KW-1185">Reference proteome</keyword>
<keyword id="KW-0716">Sensory transduction</keyword>
<sequence>MDSSNVEENLNPETKSAEEQNPLAIFHSSLPIASLSLTLFPSSTQFLKLFAHHPNKVKIPTQASSLTHLSLSSVSPFPSSRISFKSTIAANPLQSPLSIVPRRPVDPSSAAALRRAAVVWFRNDLRVHDNECLNSANDECVSVLPVYCFDPRDYGKSSSGFDKTGPFRAQFLIESVSELRKNLQARGSNLVVRVGKPEAVLVELAKEIGADAVYAHREVSHDEVKAEGKIETAMKEEGVEVKYFWGSTLYHLDDLPFKIEDLPSNYGAFKDKVQKLEIRKTIAALDQLKSLPSRGDVELGDIPSLLDLGISPTPRTSQEGKPTMVGGETEALTRLKSFAADCQARLSKGNQKGGNNSVFGANFSCKISPWLAMGSISPRSMFDELKKTISASTTSTTPRNGPGDTGLNWLMYELLWRDFFRFITKKYSSAKTQVEAGPATACTGAFA</sequence>
<comment type="cofactor">
    <cofactor evidence="1">
        <name>FAD</name>
        <dbReference type="ChEBI" id="CHEBI:57692"/>
    </cofactor>
    <text evidence="1">Binds 1 FAD per subunit.</text>
</comment>
<comment type="similarity">
    <text evidence="3">Belongs to the DNA photolyase class-1 family.</text>
</comment>
<protein>
    <recommendedName>
        <fullName>Blue-light photoreceptor PHR2</fullName>
    </recommendedName>
</protein>
<dbReference type="EMBL" id="AF053366">
    <property type="protein sequence ID" value="AAC26199.1"/>
    <property type="molecule type" value="mRNA"/>
</dbReference>
<dbReference type="EMBL" id="AC002535">
    <property type="protein sequence ID" value="AAC62851.1"/>
    <property type="molecule type" value="Genomic_DNA"/>
</dbReference>
<dbReference type="EMBL" id="CP002685">
    <property type="protein sequence ID" value="AEC10862.1"/>
    <property type="molecule type" value="Genomic_DNA"/>
</dbReference>
<dbReference type="EMBL" id="AY087383">
    <property type="protein sequence ID" value="AAM64933.1"/>
    <property type="molecule type" value="mRNA"/>
</dbReference>
<dbReference type="PIR" id="T00425">
    <property type="entry name" value="T00425"/>
</dbReference>
<dbReference type="RefSeq" id="NP_182281.1">
    <property type="nucleotide sequence ID" value="NM_130327.4"/>
</dbReference>
<dbReference type="SMR" id="Q8LB72"/>
<dbReference type="BioGRID" id="4707">
    <property type="interactions" value="4"/>
</dbReference>
<dbReference type="FunCoup" id="Q8LB72">
    <property type="interactions" value="934"/>
</dbReference>
<dbReference type="STRING" id="3702.Q8LB72"/>
<dbReference type="GlyGen" id="Q8LB72">
    <property type="glycosylation" value="1 site"/>
</dbReference>
<dbReference type="PaxDb" id="3702-AT2G47590.1"/>
<dbReference type="ProteomicsDB" id="235106"/>
<dbReference type="EnsemblPlants" id="AT2G47590.1">
    <property type="protein sequence ID" value="AT2G47590.1"/>
    <property type="gene ID" value="AT2G47590"/>
</dbReference>
<dbReference type="GeneID" id="819372"/>
<dbReference type="Gramene" id="AT2G47590.1">
    <property type="protein sequence ID" value="AT2G47590.1"/>
    <property type="gene ID" value="AT2G47590"/>
</dbReference>
<dbReference type="KEGG" id="ath:AT2G47590"/>
<dbReference type="Araport" id="AT2G47590"/>
<dbReference type="TAIR" id="AT2G47590">
    <property type="gene designation" value="PHR2"/>
</dbReference>
<dbReference type="eggNOG" id="KOG0133">
    <property type="taxonomic scope" value="Eukaryota"/>
</dbReference>
<dbReference type="HOGENOM" id="CLU_010348_0_0_1"/>
<dbReference type="InParanoid" id="Q8LB72"/>
<dbReference type="OMA" id="MAPAYTS"/>
<dbReference type="PhylomeDB" id="Q8LB72"/>
<dbReference type="PRO" id="PR:Q8LB72"/>
<dbReference type="Proteomes" id="UP000006548">
    <property type="component" value="Chromosome 2"/>
</dbReference>
<dbReference type="ExpressionAtlas" id="Q8LB72">
    <property type="expression patterns" value="baseline and differential"/>
</dbReference>
<dbReference type="GO" id="GO:0009881">
    <property type="term" value="F:photoreceptor activity"/>
    <property type="evidence" value="ECO:0007669"/>
    <property type="project" value="UniProtKB-KW"/>
</dbReference>
<dbReference type="GO" id="GO:0006139">
    <property type="term" value="P:nucleobase-containing compound metabolic process"/>
    <property type="evidence" value="ECO:0007669"/>
    <property type="project" value="UniProtKB-ARBA"/>
</dbReference>
<dbReference type="Gene3D" id="1.25.40.80">
    <property type="match status" value="1"/>
</dbReference>
<dbReference type="Gene3D" id="3.40.50.620">
    <property type="entry name" value="HUPs"/>
    <property type="match status" value="1"/>
</dbReference>
<dbReference type="InterPro" id="IPR036134">
    <property type="entry name" value="Crypto/Photolyase_FAD-like_sf"/>
</dbReference>
<dbReference type="InterPro" id="IPR036155">
    <property type="entry name" value="Crypto/Photolyase_N_sf"/>
</dbReference>
<dbReference type="InterPro" id="IPR002081">
    <property type="entry name" value="Cryptochrome/DNA_photolyase_1"/>
</dbReference>
<dbReference type="InterPro" id="IPR006050">
    <property type="entry name" value="DNA_photolyase_N"/>
</dbReference>
<dbReference type="InterPro" id="IPR014729">
    <property type="entry name" value="Rossmann-like_a/b/a_fold"/>
</dbReference>
<dbReference type="PANTHER" id="PTHR11455:SF2">
    <property type="entry name" value="BLUE-LIGHT PHOTORECEPTOR PHR2"/>
    <property type="match status" value="1"/>
</dbReference>
<dbReference type="PANTHER" id="PTHR11455">
    <property type="entry name" value="CRYPTOCHROME"/>
    <property type="match status" value="1"/>
</dbReference>
<dbReference type="Pfam" id="PF00875">
    <property type="entry name" value="DNA_photolyase"/>
    <property type="match status" value="1"/>
</dbReference>
<dbReference type="SUPFAM" id="SSF48173">
    <property type="entry name" value="Cryptochrome/photolyase FAD-binding domain"/>
    <property type="match status" value="1"/>
</dbReference>
<dbReference type="SUPFAM" id="SSF52425">
    <property type="entry name" value="Cryptochrome/photolyase, N-terminal domain"/>
    <property type="match status" value="1"/>
</dbReference>
<dbReference type="PROSITE" id="PS51645">
    <property type="entry name" value="PHR_CRY_ALPHA_BETA"/>
    <property type="match status" value="1"/>
</dbReference>
<proteinExistence type="evidence at transcript level"/>
<gene>
    <name type="primary">PHR2</name>
    <name type="ordered locus">At2g47590</name>
    <name type="ORF">T30B22.11</name>
</gene>
<accession>Q8LB72</accession>
<accession>O22253</accession>
<reference key="1">
    <citation type="online journal article" date="1998" name="Plant Gene Register">
        <title>PHR2: a novel Arabidopsis gene related to the blue-light photoreceptor/photolyase family.</title>
        <authorList>
            <person name="Ahmad M."/>
            <person name="Jarillo J.A."/>
            <person name="Cashmore A.R."/>
        </authorList>
        <locator>PGR98-096</locator>
    </citation>
    <scope>NUCLEOTIDE SEQUENCE [MRNA]</scope>
    <source>
        <strain>cv. Columbia</strain>
    </source>
</reference>
<reference key="2">
    <citation type="journal article" date="1999" name="Nature">
        <title>Sequence and analysis of chromosome 2 of the plant Arabidopsis thaliana.</title>
        <authorList>
            <person name="Lin X."/>
            <person name="Kaul S."/>
            <person name="Rounsley S.D."/>
            <person name="Shea T.P."/>
            <person name="Benito M.-I."/>
            <person name="Town C.D."/>
            <person name="Fujii C.Y."/>
            <person name="Mason T.M."/>
            <person name="Bowman C.L."/>
            <person name="Barnstead M.E."/>
            <person name="Feldblyum T.V."/>
            <person name="Buell C.R."/>
            <person name="Ketchum K.A."/>
            <person name="Lee J.J."/>
            <person name="Ronning C.M."/>
            <person name="Koo H.L."/>
            <person name="Moffat K.S."/>
            <person name="Cronin L.A."/>
            <person name="Shen M."/>
            <person name="Pai G."/>
            <person name="Van Aken S."/>
            <person name="Umayam L."/>
            <person name="Tallon L.J."/>
            <person name="Gill J.E."/>
            <person name="Adams M.D."/>
            <person name="Carrera A.J."/>
            <person name="Creasy T.H."/>
            <person name="Goodman H.M."/>
            <person name="Somerville C.R."/>
            <person name="Copenhaver G.P."/>
            <person name="Preuss D."/>
            <person name="Nierman W.C."/>
            <person name="White O."/>
            <person name="Eisen J.A."/>
            <person name="Salzberg S.L."/>
            <person name="Fraser C.M."/>
            <person name="Venter J.C."/>
        </authorList>
    </citation>
    <scope>NUCLEOTIDE SEQUENCE [LARGE SCALE GENOMIC DNA]</scope>
    <source>
        <strain>cv. Columbia</strain>
    </source>
</reference>
<reference key="3">
    <citation type="journal article" date="2017" name="Plant J.">
        <title>Araport11: a complete reannotation of the Arabidopsis thaliana reference genome.</title>
        <authorList>
            <person name="Cheng C.Y."/>
            <person name="Krishnakumar V."/>
            <person name="Chan A.P."/>
            <person name="Thibaud-Nissen F."/>
            <person name="Schobel S."/>
            <person name="Town C.D."/>
        </authorList>
    </citation>
    <scope>GENOME REANNOTATION</scope>
    <source>
        <strain>cv. Columbia</strain>
    </source>
</reference>
<reference key="4">
    <citation type="submission" date="2002-03" db="EMBL/GenBank/DDBJ databases">
        <title>Full-length cDNA from Arabidopsis thaliana.</title>
        <authorList>
            <person name="Brover V.V."/>
            <person name="Troukhan M.E."/>
            <person name="Alexandrov N.A."/>
            <person name="Lu Y.-P."/>
            <person name="Flavell R.B."/>
            <person name="Feldmann K.A."/>
        </authorList>
    </citation>
    <scope>NUCLEOTIDE SEQUENCE [LARGE SCALE MRNA]</scope>
</reference>
<feature type="chain" id="PRO_0000253763" description="Blue-light photoreceptor PHR2">
    <location>
        <begin position="1"/>
        <end position="447"/>
    </location>
</feature>
<feature type="domain" description="Photolyase/cryptochrome alpha/beta">
    <location>
        <begin position="115"/>
        <end position="249"/>
    </location>
</feature>
<feature type="region of interest" description="Disordered" evidence="2">
    <location>
        <begin position="1"/>
        <end position="20"/>
    </location>
</feature>
<feature type="compositionally biased region" description="Polar residues" evidence="2">
    <location>
        <begin position="1"/>
        <end position="14"/>
    </location>
</feature>
<name>PHR2_ARATH</name>
<evidence type="ECO:0000250" key="1"/>
<evidence type="ECO:0000256" key="2">
    <source>
        <dbReference type="SAM" id="MobiDB-lite"/>
    </source>
</evidence>
<evidence type="ECO:0000305" key="3"/>